<organism>
    <name type="scientific">Bordetella avium (strain 197N)</name>
    <dbReference type="NCBI Taxonomy" id="360910"/>
    <lineage>
        <taxon>Bacteria</taxon>
        <taxon>Pseudomonadati</taxon>
        <taxon>Pseudomonadota</taxon>
        <taxon>Betaproteobacteria</taxon>
        <taxon>Burkholderiales</taxon>
        <taxon>Alcaligenaceae</taxon>
        <taxon>Bordetella</taxon>
    </lineage>
</organism>
<keyword id="KW-0067">ATP-binding</keyword>
<keyword id="KW-0143">Chaperone</keyword>
<keyword id="KW-0547">Nucleotide-binding</keyword>
<keyword id="KW-0597">Phosphoprotein</keyword>
<keyword id="KW-1185">Reference proteome</keyword>
<keyword id="KW-0346">Stress response</keyword>
<sequence length="644" mass="69818">MSKIIGIDLGTTNSCVAVMDGGQVKIIENAEGARTTPSIVAYMEDGEILVGAPAKRQAVTNPKNTLYAVKRLIGRKFDEKAVQKDIHLMPYTITKADNGDAWVEVRGSKLAPPQVSAEVLRKMKKTAEDYLGEPVTEAVITVPAYFNDSQRQATKDAGRIAGLEVKRIINEPTAAALAFGLDKTEKGDRKIAVYDLGGGTFDVSIIEIADVDGEKQFEVLSTNGDTFLGGEDFDQRIIDYIIGEFKKEQGVDLSKDVLALQRLKEAAEKAKIELSSSQQTEINLPYITADASGPKHLNLKITRAKLESLVEELIERTIEPCRVAIKDAGVKVSDIDDVILVGGMTRMPKVQEKVKEFFGREPRKDVNPDEAVAAGAAIQGSVLSGDRKDVLLLDVTPLSLGIETLGGVMTKMIQKNTTIPTRFSQTFSTADDNQPAVTIKVFQGEREIAAGNKALGEFNLEGIPPAPRGLPQIEVTFDIDANGILHVSAKDKGTGKENKITIKANSGLSEDEIQRMVKDAEANAEEDHRLAELALARNQADALVHATRKSLTEYGDKLEAAEKESIEKALKDVEESLKAGDKAEIDAKVEALTQASQKLGEKMYADAQAQQAAQQASHQQAADNAKPVDDNVVDADFKEVKRDN</sequence>
<evidence type="ECO:0000255" key="1">
    <source>
        <dbReference type="HAMAP-Rule" id="MF_00332"/>
    </source>
</evidence>
<evidence type="ECO:0000256" key="2">
    <source>
        <dbReference type="SAM" id="MobiDB-lite"/>
    </source>
</evidence>
<protein>
    <recommendedName>
        <fullName evidence="1">Chaperone protein DnaK</fullName>
    </recommendedName>
    <alternativeName>
        <fullName evidence="1">HSP70</fullName>
    </alternativeName>
    <alternativeName>
        <fullName evidence="1">Heat shock 70 kDa protein</fullName>
    </alternativeName>
    <alternativeName>
        <fullName evidence="1">Heat shock protein 70</fullName>
    </alternativeName>
</protein>
<comment type="function">
    <text evidence="1">Acts as a chaperone.</text>
</comment>
<comment type="induction">
    <text evidence="1">By stress conditions e.g. heat shock.</text>
</comment>
<comment type="similarity">
    <text evidence="1">Belongs to the heat shock protein 70 family.</text>
</comment>
<dbReference type="EMBL" id="AM167904">
    <property type="protein sequence ID" value="CAJ50327.1"/>
    <property type="molecule type" value="Genomic_DNA"/>
</dbReference>
<dbReference type="RefSeq" id="WP_012418358.1">
    <property type="nucleotide sequence ID" value="NC_010645.1"/>
</dbReference>
<dbReference type="SMR" id="Q2KWA2"/>
<dbReference type="STRING" id="360910.BAV2716"/>
<dbReference type="GeneID" id="92934100"/>
<dbReference type="KEGG" id="bav:BAV2716"/>
<dbReference type="eggNOG" id="COG0443">
    <property type="taxonomic scope" value="Bacteria"/>
</dbReference>
<dbReference type="HOGENOM" id="CLU_005965_2_3_4"/>
<dbReference type="OrthoDB" id="9766019at2"/>
<dbReference type="Proteomes" id="UP000001977">
    <property type="component" value="Chromosome"/>
</dbReference>
<dbReference type="GO" id="GO:0005524">
    <property type="term" value="F:ATP binding"/>
    <property type="evidence" value="ECO:0007669"/>
    <property type="project" value="UniProtKB-UniRule"/>
</dbReference>
<dbReference type="GO" id="GO:0140662">
    <property type="term" value="F:ATP-dependent protein folding chaperone"/>
    <property type="evidence" value="ECO:0007669"/>
    <property type="project" value="InterPro"/>
</dbReference>
<dbReference type="GO" id="GO:0051082">
    <property type="term" value="F:unfolded protein binding"/>
    <property type="evidence" value="ECO:0007669"/>
    <property type="project" value="InterPro"/>
</dbReference>
<dbReference type="CDD" id="cd10234">
    <property type="entry name" value="ASKHA_NBD_HSP70_DnaK-like"/>
    <property type="match status" value="1"/>
</dbReference>
<dbReference type="FunFam" id="2.60.34.10:FF:000014">
    <property type="entry name" value="Chaperone protein DnaK HSP70"/>
    <property type="match status" value="1"/>
</dbReference>
<dbReference type="FunFam" id="1.20.1270.10:FF:000001">
    <property type="entry name" value="Molecular chaperone DnaK"/>
    <property type="match status" value="1"/>
</dbReference>
<dbReference type="FunFam" id="3.30.420.40:FF:000004">
    <property type="entry name" value="Molecular chaperone DnaK"/>
    <property type="match status" value="1"/>
</dbReference>
<dbReference type="FunFam" id="3.90.640.10:FF:000003">
    <property type="entry name" value="Molecular chaperone DnaK"/>
    <property type="match status" value="1"/>
</dbReference>
<dbReference type="Gene3D" id="1.20.1270.10">
    <property type="match status" value="1"/>
</dbReference>
<dbReference type="Gene3D" id="3.30.420.40">
    <property type="match status" value="2"/>
</dbReference>
<dbReference type="Gene3D" id="3.90.640.10">
    <property type="entry name" value="Actin, Chain A, domain 4"/>
    <property type="match status" value="1"/>
</dbReference>
<dbReference type="Gene3D" id="2.60.34.10">
    <property type="entry name" value="Substrate Binding Domain Of DNAk, Chain A, domain 1"/>
    <property type="match status" value="1"/>
</dbReference>
<dbReference type="HAMAP" id="MF_00332">
    <property type="entry name" value="DnaK"/>
    <property type="match status" value="1"/>
</dbReference>
<dbReference type="InterPro" id="IPR043129">
    <property type="entry name" value="ATPase_NBD"/>
</dbReference>
<dbReference type="InterPro" id="IPR012725">
    <property type="entry name" value="Chaperone_DnaK"/>
</dbReference>
<dbReference type="InterPro" id="IPR018181">
    <property type="entry name" value="Heat_shock_70_CS"/>
</dbReference>
<dbReference type="InterPro" id="IPR029048">
    <property type="entry name" value="HSP70_C_sf"/>
</dbReference>
<dbReference type="InterPro" id="IPR029047">
    <property type="entry name" value="HSP70_peptide-bd_sf"/>
</dbReference>
<dbReference type="InterPro" id="IPR013126">
    <property type="entry name" value="Hsp_70_fam"/>
</dbReference>
<dbReference type="NCBIfam" id="NF001413">
    <property type="entry name" value="PRK00290.1"/>
    <property type="match status" value="1"/>
</dbReference>
<dbReference type="NCBIfam" id="NF003520">
    <property type="entry name" value="PRK05183.1"/>
    <property type="match status" value="1"/>
</dbReference>
<dbReference type="NCBIfam" id="TIGR02350">
    <property type="entry name" value="prok_dnaK"/>
    <property type="match status" value="1"/>
</dbReference>
<dbReference type="PANTHER" id="PTHR19375">
    <property type="entry name" value="HEAT SHOCK PROTEIN 70KDA"/>
    <property type="match status" value="1"/>
</dbReference>
<dbReference type="Pfam" id="PF00012">
    <property type="entry name" value="HSP70"/>
    <property type="match status" value="1"/>
</dbReference>
<dbReference type="PRINTS" id="PR00301">
    <property type="entry name" value="HEATSHOCK70"/>
</dbReference>
<dbReference type="SUPFAM" id="SSF53067">
    <property type="entry name" value="Actin-like ATPase domain"/>
    <property type="match status" value="2"/>
</dbReference>
<dbReference type="SUPFAM" id="SSF100934">
    <property type="entry name" value="Heat shock protein 70kD (HSP70), C-terminal subdomain"/>
    <property type="match status" value="1"/>
</dbReference>
<dbReference type="SUPFAM" id="SSF100920">
    <property type="entry name" value="Heat shock protein 70kD (HSP70), peptide-binding domain"/>
    <property type="match status" value="1"/>
</dbReference>
<dbReference type="PROSITE" id="PS00297">
    <property type="entry name" value="HSP70_1"/>
    <property type="match status" value="1"/>
</dbReference>
<dbReference type="PROSITE" id="PS00329">
    <property type="entry name" value="HSP70_2"/>
    <property type="match status" value="1"/>
</dbReference>
<dbReference type="PROSITE" id="PS01036">
    <property type="entry name" value="HSP70_3"/>
    <property type="match status" value="1"/>
</dbReference>
<reference key="1">
    <citation type="journal article" date="2006" name="J. Bacteriol.">
        <title>Comparison of the genome sequence of the poultry pathogen Bordetella avium with those of B. bronchiseptica, B. pertussis, and B. parapertussis reveals extensive diversity in surface structures associated with host interaction.</title>
        <authorList>
            <person name="Sebaihia M."/>
            <person name="Preston A."/>
            <person name="Maskell D.J."/>
            <person name="Kuzmiak H."/>
            <person name="Connell T.D."/>
            <person name="King N.D."/>
            <person name="Orndorff P.E."/>
            <person name="Miyamoto D.M."/>
            <person name="Thomson N.R."/>
            <person name="Harris D."/>
            <person name="Goble A."/>
            <person name="Lord A."/>
            <person name="Murphy L."/>
            <person name="Quail M.A."/>
            <person name="Rutter S."/>
            <person name="Squares R."/>
            <person name="Squares S."/>
            <person name="Woodward J."/>
            <person name="Parkhill J."/>
            <person name="Temple L.M."/>
        </authorList>
    </citation>
    <scope>NUCLEOTIDE SEQUENCE [LARGE SCALE GENOMIC DNA]</scope>
    <source>
        <strain>197N</strain>
    </source>
</reference>
<gene>
    <name evidence="1" type="primary">dnaK</name>
    <name type="ordered locus">BAV2716</name>
</gene>
<accession>Q2KWA2</accession>
<name>DNAK_BORA1</name>
<proteinExistence type="inferred from homology"/>
<feature type="chain" id="PRO_1000059515" description="Chaperone protein DnaK">
    <location>
        <begin position="1"/>
        <end position="644"/>
    </location>
</feature>
<feature type="region of interest" description="Disordered" evidence="2">
    <location>
        <begin position="609"/>
        <end position="644"/>
    </location>
</feature>
<feature type="compositionally biased region" description="Low complexity" evidence="2">
    <location>
        <begin position="609"/>
        <end position="625"/>
    </location>
</feature>
<feature type="compositionally biased region" description="Basic and acidic residues" evidence="2">
    <location>
        <begin position="635"/>
        <end position="644"/>
    </location>
</feature>
<feature type="modified residue" description="Phosphothreonine; by autocatalysis" evidence="1">
    <location>
        <position position="200"/>
    </location>
</feature>